<sequence length="344" mass="39341">MIFGGAFDPLHQAHIYIAKRAVQAIKAQKLYFVPTAKAFFKSPIKASNQARLAMLRVALKALPQMAVSNFDIKAQNGFSFNTVQHFKQRFPNAELYFLIGSDKLSELAKWHNIEQLQKLCRFVCYERFGYPIDEQLVQQFNVRLLGKCPLDLASSEMFGSHKFRQIPAKVLHYIHQHNIYLKTILQTLLDEPRMQHCLRVGQLAKTLAVANKLDGKTAYTAGAYHDLAKQLPQAQLEKLAKVAGVNDYPSWKVLHSYAGAYILKHWYGLNNSAVFSAIWNHTVPPQKMSQLDMIIYLADKLEPMRVHEEWAKGIDITALVKLAKKDLKLAYQITLKYVRSLQKN</sequence>
<accession>P75442</accession>
<comment type="function">
    <text evidence="1">Catalyzes the reversible adenylation of nicotinate mononucleotide (NaMN) to nicotinic acid adenine dinucleotide (NaAD).</text>
</comment>
<comment type="function">
    <text evidence="2">Hydrolyzes diadenosine 5',5'''-P1,P4-tetraphosphate (Ap4A) to yield ADP.</text>
</comment>
<comment type="catalytic activity">
    <reaction evidence="1">
        <text>nicotinate beta-D-ribonucleotide + ATP + H(+) = deamido-NAD(+) + diphosphate</text>
        <dbReference type="Rhea" id="RHEA:22860"/>
        <dbReference type="ChEBI" id="CHEBI:15378"/>
        <dbReference type="ChEBI" id="CHEBI:30616"/>
        <dbReference type="ChEBI" id="CHEBI:33019"/>
        <dbReference type="ChEBI" id="CHEBI:57502"/>
        <dbReference type="ChEBI" id="CHEBI:58437"/>
        <dbReference type="EC" id="2.7.7.18"/>
    </reaction>
</comment>
<comment type="catalytic activity">
    <reaction evidence="2">
        <text>P(1),P(4)-bis(5'-adenosyl) tetraphosphate + H2O = 2 ADP + 2 H(+)</text>
        <dbReference type="Rhea" id="RHEA:24252"/>
        <dbReference type="ChEBI" id="CHEBI:15377"/>
        <dbReference type="ChEBI" id="CHEBI:15378"/>
        <dbReference type="ChEBI" id="CHEBI:58141"/>
        <dbReference type="ChEBI" id="CHEBI:456216"/>
        <dbReference type="EC" id="3.6.1.41"/>
    </reaction>
</comment>
<comment type="pathway">
    <text evidence="1">Cofactor biosynthesis; NAD(+) biosynthesis; deamido-NAD(+) from nicotinate D-ribonucleotide: step 1/1.</text>
</comment>
<comment type="similarity">
    <text evidence="5">In the N-terminal section; belongs to the NadD family.</text>
</comment>
<comment type="similarity">
    <text evidence="5">In the C-terminal section; belongs to the Ap4A hydrolase YqeK family.</text>
</comment>
<name>NNAAH_MYCPN</name>
<protein>
    <recommendedName>
        <fullName evidence="5">Probable nicotinate-nucleotide adenylyltransferase/Ap4A hydrolase</fullName>
    </recommendedName>
    <domain>
        <recommendedName>
            <fullName evidence="1">Nicotinate-nucleotide adenylyltransferase</fullName>
            <ecNumber evidence="1">2.7.7.18</ecNumber>
        </recommendedName>
        <alternativeName>
            <fullName evidence="1">Deamido-NAD(+) diphosphorylase</fullName>
        </alternativeName>
        <alternativeName>
            <fullName evidence="1">Deamido-NAD(+) pyrophosphorylase</fullName>
        </alternativeName>
        <alternativeName>
            <fullName evidence="1">Nicotinate mononucleotide adenylyltransferase</fullName>
            <shortName evidence="1">NaMN adenylyltransferase</shortName>
        </alternativeName>
    </domain>
    <domain>
        <recommendedName>
            <fullName evidence="2">Bis(5'-nucleosyl)-tetraphosphatase, symmetrical</fullName>
            <ecNumber evidence="2">3.6.1.41</ecNumber>
        </recommendedName>
        <alternativeName>
            <fullName evidence="2">Ap4A hydrolase</fullName>
        </alternativeName>
    </domain>
</protein>
<feature type="chain" id="PRO_0000210478" description="Probable nicotinate-nucleotide adenylyltransferase/Ap4A hydrolase">
    <location>
        <begin position="1"/>
        <end position="344"/>
    </location>
</feature>
<feature type="domain" description="HD" evidence="4">
    <location>
        <begin position="193"/>
        <end position="304"/>
    </location>
</feature>
<feature type="region of interest" description="NaMN adenylyltransferase" evidence="5">
    <location>
        <begin position="1"/>
        <end position="182"/>
    </location>
</feature>
<feature type="region of interest" description="Ap4A hydrolase" evidence="5">
    <location>
        <begin position="191"/>
        <end position="344"/>
    </location>
</feature>
<feature type="binding site" evidence="3">
    <location>
        <position position="196"/>
    </location>
    <ligand>
        <name>ADP</name>
        <dbReference type="ChEBI" id="CHEBI:456216"/>
    </ligand>
</feature>
<feature type="binding site" evidence="3">
    <location>
        <position position="196"/>
    </location>
    <ligand>
        <name>Fe cation</name>
        <dbReference type="ChEBI" id="CHEBI:24875"/>
    </ligand>
</feature>
<feature type="binding site" evidence="3">
    <location>
        <position position="225"/>
    </location>
    <ligand>
        <name>Fe cation</name>
        <dbReference type="ChEBI" id="CHEBI:24875"/>
    </ligand>
</feature>
<feature type="binding site" evidence="3">
    <location>
        <begin position="226"/>
        <end position="229"/>
    </location>
    <ligand>
        <name>ADP</name>
        <dbReference type="ChEBI" id="CHEBI:456216"/>
    </ligand>
</feature>
<feature type="binding site" evidence="3">
    <location>
        <position position="226"/>
    </location>
    <ligand>
        <name>Fe cation</name>
        <dbReference type="ChEBI" id="CHEBI:24875"/>
    </ligand>
</feature>
<feature type="binding site" evidence="3">
    <location>
        <position position="255"/>
    </location>
    <ligand>
        <name>ADP</name>
        <dbReference type="ChEBI" id="CHEBI:456216"/>
    </ligand>
</feature>
<feature type="binding site" evidence="3">
    <location>
        <begin position="281"/>
        <end position="282"/>
    </location>
    <ligand>
        <name>ADP</name>
        <dbReference type="ChEBI" id="CHEBI:456216"/>
    </ligand>
</feature>
<feature type="binding site" evidence="3">
    <location>
        <position position="299"/>
    </location>
    <ligand>
        <name>ADP</name>
        <dbReference type="ChEBI" id="CHEBI:456216"/>
    </ligand>
</feature>
<feature type="binding site" evidence="3">
    <location>
        <position position="299"/>
    </location>
    <ligand>
        <name>Fe cation</name>
        <dbReference type="ChEBI" id="CHEBI:24875"/>
    </ligand>
</feature>
<feature type="binding site" evidence="3">
    <location>
        <position position="305"/>
    </location>
    <ligand>
        <name>ADP</name>
        <dbReference type="ChEBI" id="CHEBI:456216"/>
    </ligand>
</feature>
<gene>
    <name type="ordered locus">MPN_336</name>
    <name type="ORF">F10_orf291</name>
    <name type="ORF">MP500</name>
</gene>
<reference key="1">
    <citation type="journal article" date="1996" name="Nucleic Acids Res.">
        <title>Complete sequence analysis of the genome of the bacterium Mycoplasma pneumoniae.</title>
        <authorList>
            <person name="Himmelreich R."/>
            <person name="Hilbert H."/>
            <person name="Plagens H."/>
            <person name="Pirkl E."/>
            <person name="Li B.-C."/>
            <person name="Herrmann R."/>
        </authorList>
    </citation>
    <scope>NUCLEOTIDE SEQUENCE [LARGE SCALE GENOMIC DNA]</scope>
    <source>
        <strain>ATCC 29342 / M129 / Subtype 1</strain>
    </source>
</reference>
<reference key="2">
    <citation type="journal article" date="2000" name="Nucleic Acids Res.">
        <title>Re-annotating the Mycoplasma pneumoniae genome sequence: adding value, function and reading frames.</title>
        <authorList>
            <person name="Dandekar T."/>
            <person name="Huynen M."/>
            <person name="Regula J.T."/>
            <person name="Ueberle B."/>
            <person name="Zimmermann C.U."/>
            <person name="Andrade M.A."/>
            <person name="Doerks T."/>
            <person name="Sanchez-Pulido L."/>
            <person name="Snel B."/>
            <person name="Suyama M."/>
            <person name="Yuan Y.P."/>
            <person name="Herrmann R."/>
            <person name="Bork P."/>
        </authorList>
    </citation>
    <scope>SEQUENCE REVISION</scope>
    <source>
        <strain>ATCC 29342 / M129 / Subtype 1</strain>
    </source>
</reference>
<keyword id="KW-0067">ATP-binding</keyword>
<keyword id="KW-0378">Hydrolase</keyword>
<keyword id="KW-0408">Iron</keyword>
<keyword id="KW-0479">Metal-binding</keyword>
<keyword id="KW-0511">Multifunctional enzyme</keyword>
<keyword id="KW-0520">NAD</keyword>
<keyword id="KW-0547">Nucleotide-binding</keyword>
<keyword id="KW-0548">Nucleotidyltransferase</keyword>
<keyword id="KW-0662">Pyridine nucleotide biosynthesis</keyword>
<keyword id="KW-1185">Reference proteome</keyword>
<keyword id="KW-0808">Transferase</keyword>
<proteinExistence type="inferred from homology"/>
<evidence type="ECO:0000250" key="1">
    <source>
        <dbReference type="UniProtKB" id="P0A752"/>
    </source>
</evidence>
<evidence type="ECO:0000250" key="2">
    <source>
        <dbReference type="UniProtKB" id="Q2G297"/>
    </source>
</evidence>
<evidence type="ECO:0000250" key="3">
    <source>
        <dbReference type="UniProtKB" id="Q9KD90"/>
    </source>
</evidence>
<evidence type="ECO:0000255" key="4">
    <source>
        <dbReference type="PROSITE-ProRule" id="PRU01175"/>
    </source>
</evidence>
<evidence type="ECO:0000305" key="5"/>
<dbReference type="EC" id="2.7.7.18" evidence="1"/>
<dbReference type="EC" id="3.6.1.41" evidence="2"/>
<dbReference type="EMBL" id="U00089">
    <property type="protein sequence ID" value="AAB96148.2"/>
    <property type="molecule type" value="Genomic_DNA"/>
</dbReference>
<dbReference type="PIR" id="S73826">
    <property type="entry name" value="S73826"/>
</dbReference>
<dbReference type="SMR" id="P75442"/>
<dbReference type="STRING" id="272634.MPN_336"/>
<dbReference type="EnsemblBacteria" id="AAB96148">
    <property type="protein sequence ID" value="AAB96148"/>
    <property type="gene ID" value="MPN_336"/>
</dbReference>
<dbReference type="KEGG" id="mpn:MPN_336"/>
<dbReference type="HOGENOM" id="CLU_050191_0_0_14"/>
<dbReference type="UniPathway" id="UPA00253">
    <property type="reaction ID" value="UER00332"/>
</dbReference>
<dbReference type="Proteomes" id="UP000000808">
    <property type="component" value="Chromosome"/>
</dbReference>
<dbReference type="GO" id="GO:0005524">
    <property type="term" value="F:ATP binding"/>
    <property type="evidence" value="ECO:0007669"/>
    <property type="project" value="UniProtKB-KW"/>
</dbReference>
<dbReference type="GO" id="GO:0016787">
    <property type="term" value="F:hydrolase activity"/>
    <property type="evidence" value="ECO:0007669"/>
    <property type="project" value="UniProtKB-KW"/>
</dbReference>
<dbReference type="GO" id="GO:0046872">
    <property type="term" value="F:metal ion binding"/>
    <property type="evidence" value="ECO:0007669"/>
    <property type="project" value="UniProtKB-KW"/>
</dbReference>
<dbReference type="GO" id="GO:0004515">
    <property type="term" value="F:nicotinate-nucleotide adenylyltransferase activity"/>
    <property type="evidence" value="ECO:0007669"/>
    <property type="project" value="UniProtKB-UniRule"/>
</dbReference>
<dbReference type="GO" id="GO:0009435">
    <property type="term" value="P:NAD biosynthetic process"/>
    <property type="evidence" value="ECO:0007669"/>
    <property type="project" value="UniProtKB-UniRule"/>
</dbReference>
<dbReference type="CDD" id="cd00077">
    <property type="entry name" value="HDc"/>
    <property type="match status" value="1"/>
</dbReference>
<dbReference type="CDD" id="cd02165">
    <property type="entry name" value="NMNAT"/>
    <property type="match status" value="1"/>
</dbReference>
<dbReference type="Gene3D" id="3.40.50.620">
    <property type="entry name" value="HUPs"/>
    <property type="match status" value="1"/>
</dbReference>
<dbReference type="Gene3D" id="1.10.3210.10">
    <property type="entry name" value="Hypothetical protein af1432"/>
    <property type="match status" value="1"/>
</dbReference>
<dbReference type="HAMAP" id="MF_00244">
    <property type="entry name" value="NaMN_adenylyltr"/>
    <property type="match status" value="1"/>
</dbReference>
<dbReference type="InterPro" id="IPR004821">
    <property type="entry name" value="Cyt_trans-like"/>
</dbReference>
<dbReference type="InterPro" id="IPR051094">
    <property type="entry name" value="Diverse_Catalytic_Enzymes"/>
</dbReference>
<dbReference type="InterPro" id="IPR003607">
    <property type="entry name" value="HD/PDEase_dom"/>
</dbReference>
<dbReference type="InterPro" id="IPR006674">
    <property type="entry name" value="HD_domain"/>
</dbReference>
<dbReference type="InterPro" id="IPR005248">
    <property type="entry name" value="NadD/NMNAT"/>
</dbReference>
<dbReference type="InterPro" id="IPR014729">
    <property type="entry name" value="Rossmann-like_a/b/a_fold"/>
</dbReference>
<dbReference type="InterPro" id="IPR005249">
    <property type="entry name" value="YqeK"/>
</dbReference>
<dbReference type="NCBIfam" id="TIGR00488">
    <property type="entry name" value="bis(5'-nucleosyl)-tetraphosphatase (symmetrical) YqeK"/>
    <property type="match status" value="1"/>
</dbReference>
<dbReference type="NCBIfam" id="TIGR00482">
    <property type="entry name" value="nicotinate (nicotinamide) nucleotide adenylyltransferase"/>
    <property type="match status" value="1"/>
</dbReference>
<dbReference type="NCBIfam" id="NF005519">
    <property type="entry name" value="PRK07152.1"/>
    <property type="match status" value="1"/>
</dbReference>
<dbReference type="PANTHER" id="PTHR35795:SF1">
    <property type="entry name" value="BIS(5'-NUCLEOSYL)-TETRAPHOSPHATASE, SYMMETRICAL"/>
    <property type="match status" value="1"/>
</dbReference>
<dbReference type="PANTHER" id="PTHR35795">
    <property type="entry name" value="SLR1885 PROTEIN"/>
    <property type="match status" value="1"/>
</dbReference>
<dbReference type="Pfam" id="PF01467">
    <property type="entry name" value="CTP_transf_like"/>
    <property type="match status" value="1"/>
</dbReference>
<dbReference type="Pfam" id="PF01966">
    <property type="entry name" value="HD"/>
    <property type="match status" value="1"/>
</dbReference>
<dbReference type="SMART" id="SM00471">
    <property type="entry name" value="HDc"/>
    <property type="match status" value="1"/>
</dbReference>
<dbReference type="SUPFAM" id="SSF109604">
    <property type="entry name" value="HD-domain/PDEase-like"/>
    <property type="match status" value="1"/>
</dbReference>
<dbReference type="SUPFAM" id="SSF52374">
    <property type="entry name" value="Nucleotidylyl transferase"/>
    <property type="match status" value="1"/>
</dbReference>
<dbReference type="PROSITE" id="PS51831">
    <property type="entry name" value="HD"/>
    <property type="match status" value="1"/>
</dbReference>
<organism>
    <name type="scientific">Mycoplasma pneumoniae (strain ATCC 29342 / M129 / Subtype 1)</name>
    <name type="common">Mycoplasmoides pneumoniae</name>
    <dbReference type="NCBI Taxonomy" id="272634"/>
    <lineage>
        <taxon>Bacteria</taxon>
        <taxon>Bacillati</taxon>
        <taxon>Mycoplasmatota</taxon>
        <taxon>Mycoplasmoidales</taxon>
        <taxon>Mycoplasmoidaceae</taxon>
        <taxon>Mycoplasmoides</taxon>
    </lineage>
</organism>